<reference key="1">
    <citation type="journal article" date="2004" name="Genome Res.">
        <title>The genome sequence of Mycoplasma mycoides subsp. mycoides SC type strain PG1T, the causative agent of contagious bovine pleuropneumonia (CBPP).</title>
        <authorList>
            <person name="Westberg J."/>
            <person name="Persson A."/>
            <person name="Holmberg A."/>
            <person name="Goesmann A."/>
            <person name="Lundeberg J."/>
            <person name="Johansson K.-E."/>
            <person name="Pettersson B."/>
            <person name="Uhlen M."/>
        </authorList>
    </citation>
    <scope>NUCLEOTIDE SEQUENCE [LARGE SCALE GENOMIC DNA]</scope>
    <source>
        <strain>CCUG 32753 / NCTC 10114 / PG1</strain>
    </source>
</reference>
<gene>
    <name evidence="1" type="primary">infC</name>
    <name type="ordered locus">MSC_0221</name>
</gene>
<proteinExistence type="inferred from homology"/>
<comment type="function">
    <text evidence="1">IF-3 binds to the 30S ribosomal subunit and shifts the equilibrium between 70S ribosomes and their 50S and 30S subunits in favor of the free subunits, thus enhancing the availability of 30S subunits on which protein synthesis initiation begins.</text>
</comment>
<comment type="subunit">
    <text evidence="1">Monomer.</text>
</comment>
<comment type="subcellular location">
    <subcellularLocation>
        <location evidence="1">Cytoplasm</location>
    </subcellularLocation>
</comment>
<comment type="similarity">
    <text evidence="1">Belongs to the IF-3 family.</text>
</comment>
<sequence length="181" mass="21025">MENRNRNSRPIKNQDPVNEFIRAHQVLVIDEDKQNLGVMSKRQALEIARSKNLDLYQVGVQPDGTVITRIVNFGKLKYEQQKKSKEAKKHQTKIENKEIRITVNIGKHDLETKARKAKEFLEEGSRVKVSLKFRGREVVYLDLGQQTLNNFFELVSDVGKMEKEAKLNGKFLDMYIVPKKN</sequence>
<protein>
    <recommendedName>
        <fullName evidence="1">Translation initiation factor IF-3</fullName>
    </recommendedName>
</protein>
<dbReference type="EMBL" id="BX293980">
    <property type="protein sequence ID" value="CAE76864.1"/>
    <property type="molecule type" value="Genomic_DNA"/>
</dbReference>
<dbReference type="RefSeq" id="NP_975222.1">
    <property type="nucleotide sequence ID" value="NC_005364.2"/>
</dbReference>
<dbReference type="RefSeq" id="WP_011166421.1">
    <property type="nucleotide sequence ID" value="NC_005364.2"/>
</dbReference>
<dbReference type="SMR" id="Q6MU22"/>
<dbReference type="STRING" id="272632.MSC_0221"/>
<dbReference type="KEGG" id="mmy:MSC_0221"/>
<dbReference type="PATRIC" id="fig|272632.4.peg.235"/>
<dbReference type="eggNOG" id="COG0290">
    <property type="taxonomic scope" value="Bacteria"/>
</dbReference>
<dbReference type="HOGENOM" id="CLU_054919_3_2_14"/>
<dbReference type="Proteomes" id="UP000001016">
    <property type="component" value="Chromosome"/>
</dbReference>
<dbReference type="GO" id="GO:0005829">
    <property type="term" value="C:cytosol"/>
    <property type="evidence" value="ECO:0007669"/>
    <property type="project" value="TreeGrafter"/>
</dbReference>
<dbReference type="GO" id="GO:0016020">
    <property type="term" value="C:membrane"/>
    <property type="evidence" value="ECO:0007669"/>
    <property type="project" value="TreeGrafter"/>
</dbReference>
<dbReference type="GO" id="GO:0043022">
    <property type="term" value="F:ribosome binding"/>
    <property type="evidence" value="ECO:0007669"/>
    <property type="project" value="TreeGrafter"/>
</dbReference>
<dbReference type="GO" id="GO:0003743">
    <property type="term" value="F:translation initiation factor activity"/>
    <property type="evidence" value="ECO:0007669"/>
    <property type="project" value="UniProtKB-UniRule"/>
</dbReference>
<dbReference type="GO" id="GO:0032790">
    <property type="term" value="P:ribosome disassembly"/>
    <property type="evidence" value="ECO:0007669"/>
    <property type="project" value="TreeGrafter"/>
</dbReference>
<dbReference type="Gene3D" id="3.30.110.10">
    <property type="entry name" value="Translation initiation factor 3 (IF-3), C-terminal domain"/>
    <property type="match status" value="1"/>
</dbReference>
<dbReference type="Gene3D" id="3.10.20.80">
    <property type="entry name" value="Translation initiation factor 3 (IF-3), N-terminal domain"/>
    <property type="match status" value="1"/>
</dbReference>
<dbReference type="HAMAP" id="MF_00080">
    <property type="entry name" value="IF_3"/>
    <property type="match status" value="1"/>
</dbReference>
<dbReference type="InterPro" id="IPR036788">
    <property type="entry name" value="T_IF-3_C_sf"/>
</dbReference>
<dbReference type="InterPro" id="IPR036787">
    <property type="entry name" value="T_IF-3_N_sf"/>
</dbReference>
<dbReference type="InterPro" id="IPR019813">
    <property type="entry name" value="Translation_initiation_fac3_CS"/>
</dbReference>
<dbReference type="InterPro" id="IPR001288">
    <property type="entry name" value="Translation_initiation_fac_3"/>
</dbReference>
<dbReference type="InterPro" id="IPR019815">
    <property type="entry name" value="Translation_initiation_fac_3_C"/>
</dbReference>
<dbReference type="InterPro" id="IPR019814">
    <property type="entry name" value="Translation_initiation_fac_3_N"/>
</dbReference>
<dbReference type="NCBIfam" id="TIGR00168">
    <property type="entry name" value="infC"/>
    <property type="match status" value="1"/>
</dbReference>
<dbReference type="PANTHER" id="PTHR10938">
    <property type="entry name" value="TRANSLATION INITIATION FACTOR IF-3"/>
    <property type="match status" value="1"/>
</dbReference>
<dbReference type="PANTHER" id="PTHR10938:SF0">
    <property type="entry name" value="TRANSLATION INITIATION FACTOR IF-3, MITOCHONDRIAL"/>
    <property type="match status" value="1"/>
</dbReference>
<dbReference type="Pfam" id="PF00707">
    <property type="entry name" value="IF3_C"/>
    <property type="match status" value="1"/>
</dbReference>
<dbReference type="Pfam" id="PF05198">
    <property type="entry name" value="IF3_N"/>
    <property type="match status" value="1"/>
</dbReference>
<dbReference type="SUPFAM" id="SSF55200">
    <property type="entry name" value="Translation initiation factor IF3, C-terminal domain"/>
    <property type="match status" value="1"/>
</dbReference>
<dbReference type="SUPFAM" id="SSF54364">
    <property type="entry name" value="Translation initiation factor IF3, N-terminal domain"/>
    <property type="match status" value="1"/>
</dbReference>
<dbReference type="PROSITE" id="PS00938">
    <property type="entry name" value="IF3"/>
    <property type="match status" value="1"/>
</dbReference>
<name>IF3_MYCMS</name>
<feature type="chain" id="PRO_0000177542" description="Translation initiation factor IF-3">
    <location>
        <begin position="1"/>
        <end position="181"/>
    </location>
</feature>
<accession>Q6MU22</accession>
<organism>
    <name type="scientific">Mycoplasma mycoides subsp. mycoides SC (strain CCUG 32753 / NCTC 10114 / PG1)</name>
    <dbReference type="NCBI Taxonomy" id="272632"/>
    <lineage>
        <taxon>Bacteria</taxon>
        <taxon>Bacillati</taxon>
        <taxon>Mycoplasmatota</taxon>
        <taxon>Mollicutes</taxon>
        <taxon>Mycoplasmataceae</taxon>
        <taxon>Mycoplasma</taxon>
    </lineage>
</organism>
<keyword id="KW-0963">Cytoplasm</keyword>
<keyword id="KW-0396">Initiation factor</keyword>
<keyword id="KW-0648">Protein biosynthesis</keyword>
<keyword id="KW-1185">Reference proteome</keyword>
<evidence type="ECO:0000255" key="1">
    <source>
        <dbReference type="HAMAP-Rule" id="MF_00080"/>
    </source>
</evidence>